<name>RS10_ANAMF</name>
<protein>
    <recommendedName>
        <fullName evidence="1">Small ribosomal subunit protein uS10</fullName>
    </recommendedName>
    <alternativeName>
        <fullName evidence="2">30S ribosomal protein S10</fullName>
    </alternativeName>
</protein>
<organism>
    <name type="scientific">Anaplasma marginale (strain Florida)</name>
    <dbReference type="NCBI Taxonomy" id="320483"/>
    <lineage>
        <taxon>Bacteria</taxon>
        <taxon>Pseudomonadati</taxon>
        <taxon>Pseudomonadota</taxon>
        <taxon>Alphaproteobacteria</taxon>
        <taxon>Rickettsiales</taxon>
        <taxon>Anaplasmataceae</taxon>
        <taxon>Anaplasma</taxon>
    </lineage>
</organism>
<reference key="1">
    <citation type="journal article" date="2009" name="BMC Genomics">
        <title>Conservation in the face of diversity: multistrain analysis of an intracellular bacterium.</title>
        <authorList>
            <person name="Dark M.J."/>
            <person name="Herndon D.R."/>
            <person name="Kappmeyer L.S."/>
            <person name="Gonzales M.P."/>
            <person name="Nordeen E."/>
            <person name="Palmer G.H."/>
            <person name="Knowles D.P. Jr."/>
            <person name="Brayton K.A."/>
        </authorList>
    </citation>
    <scope>NUCLEOTIDE SEQUENCE [LARGE SCALE GENOMIC DNA]</scope>
    <source>
        <strain>Florida</strain>
    </source>
</reference>
<proteinExistence type="inferred from homology"/>
<feature type="chain" id="PRO_1000196281" description="Small ribosomal subunit protein uS10">
    <location>
        <begin position="1"/>
        <end position="105"/>
    </location>
</feature>
<keyword id="KW-1185">Reference proteome</keyword>
<keyword id="KW-0687">Ribonucleoprotein</keyword>
<keyword id="KW-0689">Ribosomal protein</keyword>
<gene>
    <name evidence="1" type="primary">rpsJ</name>
    <name type="ordered locus">AMF_697</name>
</gene>
<sequence length="105" mass="11736">MVTQKIYIELKAFDHCLLDGSARNIILIARRSGAKVNGPVFFPRRIAKFIVNRSTHVDKKSREQFEIRTHKRLISLPKANSAILQALMSLQLPAGVDVKVKVVGG</sequence>
<comment type="function">
    <text evidence="1">Involved in the binding of tRNA to the ribosomes.</text>
</comment>
<comment type="subunit">
    <text evidence="1">Part of the 30S ribosomal subunit.</text>
</comment>
<comment type="similarity">
    <text evidence="1">Belongs to the universal ribosomal protein uS10 family.</text>
</comment>
<dbReference type="EMBL" id="CP001079">
    <property type="protein sequence ID" value="ACM49533.1"/>
    <property type="molecule type" value="Genomic_DNA"/>
</dbReference>
<dbReference type="RefSeq" id="WP_010265314.1">
    <property type="nucleotide sequence ID" value="NZ_AFMS01000137.1"/>
</dbReference>
<dbReference type="SMR" id="B9KJ71"/>
<dbReference type="STRING" id="320483.AMF_697"/>
<dbReference type="GeneID" id="7397879"/>
<dbReference type="KEGG" id="amf:AMF_697"/>
<dbReference type="eggNOG" id="COG0051">
    <property type="taxonomic scope" value="Bacteria"/>
</dbReference>
<dbReference type="HOGENOM" id="CLU_122625_1_3_5"/>
<dbReference type="Proteomes" id="UP000007307">
    <property type="component" value="Chromosome"/>
</dbReference>
<dbReference type="GO" id="GO:1990904">
    <property type="term" value="C:ribonucleoprotein complex"/>
    <property type="evidence" value="ECO:0007669"/>
    <property type="project" value="UniProtKB-KW"/>
</dbReference>
<dbReference type="GO" id="GO:0005840">
    <property type="term" value="C:ribosome"/>
    <property type="evidence" value="ECO:0007669"/>
    <property type="project" value="UniProtKB-KW"/>
</dbReference>
<dbReference type="GO" id="GO:0003735">
    <property type="term" value="F:structural constituent of ribosome"/>
    <property type="evidence" value="ECO:0007669"/>
    <property type="project" value="InterPro"/>
</dbReference>
<dbReference type="GO" id="GO:0000049">
    <property type="term" value="F:tRNA binding"/>
    <property type="evidence" value="ECO:0007669"/>
    <property type="project" value="UniProtKB-UniRule"/>
</dbReference>
<dbReference type="GO" id="GO:0006412">
    <property type="term" value="P:translation"/>
    <property type="evidence" value="ECO:0007669"/>
    <property type="project" value="UniProtKB-UniRule"/>
</dbReference>
<dbReference type="FunFam" id="3.30.70.600:FF:000003">
    <property type="entry name" value="30S ribosomal protein S10"/>
    <property type="match status" value="1"/>
</dbReference>
<dbReference type="Gene3D" id="3.30.70.600">
    <property type="entry name" value="Ribosomal protein S10 domain"/>
    <property type="match status" value="1"/>
</dbReference>
<dbReference type="HAMAP" id="MF_00508">
    <property type="entry name" value="Ribosomal_uS10"/>
    <property type="match status" value="1"/>
</dbReference>
<dbReference type="InterPro" id="IPR001848">
    <property type="entry name" value="Ribosomal_uS10"/>
</dbReference>
<dbReference type="InterPro" id="IPR027486">
    <property type="entry name" value="Ribosomal_uS10_dom"/>
</dbReference>
<dbReference type="InterPro" id="IPR036838">
    <property type="entry name" value="Ribosomal_uS10_dom_sf"/>
</dbReference>
<dbReference type="NCBIfam" id="NF001861">
    <property type="entry name" value="PRK00596.1"/>
    <property type="match status" value="1"/>
</dbReference>
<dbReference type="NCBIfam" id="TIGR01049">
    <property type="entry name" value="rpsJ_bact"/>
    <property type="match status" value="1"/>
</dbReference>
<dbReference type="PANTHER" id="PTHR11700">
    <property type="entry name" value="30S RIBOSOMAL PROTEIN S10 FAMILY MEMBER"/>
    <property type="match status" value="1"/>
</dbReference>
<dbReference type="Pfam" id="PF00338">
    <property type="entry name" value="Ribosomal_S10"/>
    <property type="match status" value="1"/>
</dbReference>
<dbReference type="PRINTS" id="PR00971">
    <property type="entry name" value="RIBOSOMALS10"/>
</dbReference>
<dbReference type="SMART" id="SM01403">
    <property type="entry name" value="Ribosomal_S10"/>
    <property type="match status" value="1"/>
</dbReference>
<dbReference type="SUPFAM" id="SSF54999">
    <property type="entry name" value="Ribosomal protein S10"/>
    <property type="match status" value="1"/>
</dbReference>
<accession>B9KJ71</accession>
<evidence type="ECO:0000255" key="1">
    <source>
        <dbReference type="HAMAP-Rule" id="MF_00508"/>
    </source>
</evidence>
<evidence type="ECO:0000305" key="2"/>